<sequence length="426" mass="46213">MFTEDMRIADYDPELSAAINAEKRRQEEHIELIASENYVSPRVMEAQGGVLTNKYAEGYPGKRYYGGCEHVDVAEQLAIDRAKQLFGADYANVQPHSGSQANAGVYLALAKPGDTILGMSLDHGGHLTHGAKPNFSGKIFNAVQYGLNPETGEIDYDQVERLAKEHKPKLVIAGFSAYSRVVDWQRFRDIADSVGAYLIVDMAHVAGLVAAGLYPSPVQIADVTTTTTHKTLRGPRGGLILAKSNPEIEKKLQSLIFPGIQGGPLMHVIAAKAVAFKEALEPAFRDYQQQVVNNARAMADAVKARGYKVVSGGTDNHLFLIDLIDKGVTGKDADAALGRAYITVNKNTVPNDPQSPFVTSGLRIGTPGVTTRGFKEKEVVELANWICDVLDNMGDESVVEKVREKVLSICRDFPVYRANAKSGAAL</sequence>
<comment type="function">
    <text evidence="1">Catalyzes the reversible interconversion of serine and glycine with tetrahydrofolate (THF) serving as the one-carbon carrier. This reaction serves as the major source of one-carbon groups required for the biosynthesis of purines, thymidylate, methionine, and other important biomolecules. Also exhibits THF-independent aldolase activity toward beta-hydroxyamino acids, producing glycine and aldehydes, via a retro-aldol mechanism.</text>
</comment>
<comment type="catalytic activity">
    <reaction evidence="1">
        <text>(6R)-5,10-methylene-5,6,7,8-tetrahydrofolate + glycine + H2O = (6S)-5,6,7,8-tetrahydrofolate + L-serine</text>
        <dbReference type="Rhea" id="RHEA:15481"/>
        <dbReference type="ChEBI" id="CHEBI:15377"/>
        <dbReference type="ChEBI" id="CHEBI:15636"/>
        <dbReference type="ChEBI" id="CHEBI:33384"/>
        <dbReference type="ChEBI" id="CHEBI:57305"/>
        <dbReference type="ChEBI" id="CHEBI:57453"/>
        <dbReference type="EC" id="2.1.2.1"/>
    </reaction>
</comment>
<comment type="cofactor">
    <cofactor evidence="1">
        <name>pyridoxal 5'-phosphate</name>
        <dbReference type="ChEBI" id="CHEBI:597326"/>
    </cofactor>
</comment>
<comment type="pathway">
    <text evidence="1">One-carbon metabolism; tetrahydrofolate interconversion.</text>
</comment>
<comment type="pathway">
    <text evidence="1">Amino-acid biosynthesis; glycine biosynthesis; glycine from L-serine: step 1/1.</text>
</comment>
<comment type="subunit">
    <text evidence="1">Homodimer.</text>
</comment>
<comment type="subcellular location">
    <subcellularLocation>
        <location evidence="1">Cytoplasm</location>
    </subcellularLocation>
</comment>
<comment type="similarity">
    <text evidence="1">Belongs to the SHMT family.</text>
</comment>
<feature type="chain" id="PRO_0000234981" description="Serine hydroxymethyltransferase 1">
    <location>
        <begin position="1"/>
        <end position="426"/>
    </location>
</feature>
<feature type="binding site" evidence="1">
    <location>
        <position position="121"/>
    </location>
    <ligand>
        <name>(6S)-5,6,7,8-tetrahydrofolate</name>
        <dbReference type="ChEBI" id="CHEBI:57453"/>
    </ligand>
</feature>
<feature type="binding site" evidence="1">
    <location>
        <begin position="125"/>
        <end position="127"/>
    </location>
    <ligand>
        <name>(6S)-5,6,7,8-tetrahydrofolate</name>
        <dbReference type="ChEBI" id="CHEBI:57453"/>
    </ligand>
</feature>
<feature type="binding site" evidence="1">
    <location>
        <begin position="355"/>
        <end position="357"/>
    </location>
    <ligand>
        <name>(6S)-5,6,7,8-tetrahydrofolate</name>
        <dbReference type="ChEBI" id="CHEBI:57453"/>
    </ligand>
</feature>
<feature type="site" description="Plays an important role in substrate specificity" evidence="1">
    <location>
        <position position="229"/>
    </location>
</feature>
<feature type="modified residue" description="N6-(pyridoxal phosphate)lysine" evidence="1">
    <location>
        <position position="230"/>
    </location>
</feature>
<keyword id="KW-0028">Amino-acid biosynthesis</keyword>
<keyword id="KW-0963">Cytoplasm</keyword>
<keyword id="KW-0554">One-carbon metabolism</keyword>
<keyword id="KW-0663">Pyridoxal phosphate</keyword>
<keyword id="KW-1185">Reference proteome</keyword>
<keyword id="KW-0808">Transferase</keyword>
<accession>Q2SFI7</accession>
<evidence type="ECO:0000255" key="1">
    <source>
        <dbReference type="HAMAP-Rule" id="MF_00051"/>
    </source>
</evidence>
<reference key="1">
    <citation type="journal article" date="2005" name="Nucleic Acids Res.">
        <title>Genomic blueprint of Hahella chejuensis, a marine microbe producing an algicidal agent.</title>
        <authorList>
            <person name="Jeong H."/>
            <person name="Yim J.H."/>
            <person name="Lee C."/>
            <person name="Choi S.-H."/>
            <person name="Park Y.K."/>
            <person name="Yoon S.H."/>
            <person name="Hur C.-G."/>
            <person name="Kang H.-Y."/>
            <person name="Kim D."/>
            <person name="Lee H.H."/>
            <person name="Park K.H."/>
            <person name="Park S.-H."/>
            <person name="Park H.-S."/>
            <person name="Lee H.K."/>
            <person name="Oh T.K."/>
            <person name="Kim J.F."/>
        </authorList>
    </citation>
    <scope>NUCLEOTIDE SEQUENCE [LARGE SCALE GENOMIC DNA]</scope>
    <source>
        <strain>KCTC 2396</strain>
    </source>
</reference>
<dbReference type="EC" id="2.1.2.1" evidence="1"/>
<dbReference type="EMBL" id="CP000155">
    <property type="protein sequence ID" value="ABC30587.1"/>
    <property type="molecule type" value="Genomic_DNA"/>
</dbReference>
<dbReference type="SMR" id="Q2SFI7"/>
<dbReference type="STRING" id="349521.HCH_03860"/>
<dbReference type="KEGG" id="hch:HCH_03860"/>
<dbReference type="eggNOG" id="COG0112">
    <property type="taxonomic scope" value="Bacteria"/>
</dbReference>
<dbReference type="HOGENOM" id="CLU_022477_2_1_6"/>
<dbReference type="OrthoDB" id="9803846at2"/>
<dbReference type="UniPathway" id="UPA00193"/>
<dbReference type="UniPathway" id="UPA00288">
    <property type="reaction ID" value="UER01023"/>
</dbReference>
<dbReference type="Proteomes" id="UP000000238">
    <property type="component" value="Chromosome"/>
</dbReference>
<dbReference type="GO" id="GO:0005829">
    <property type="term" value="C:cytosol"/>
    <property type="evidence" value="ECO:0007669"/>
    <property type="project" value="TreeGrafter"/>
</dbReference>
<dbReference type="GO" id="GO:0004372">
    <property type="term" value="F:glycine hydroxymethyltransferase activity"/>
    <property type="evidence" value="ECO:0007669"/>
    <property type="project" value="UniProtKB-UniRule"/>
</dbReference>
<dbReference type="GO" id="GO:0030170">
    <property type="term" value="F:pyridoxal phosphate binding"/>
    <property type="evidence" value="ECO:0007669"/>
    <property type="project" value="UniProtKB-UniRule"/>
</dbReference>
<dbReference type="GO" id="GO:0019264">
    <property type="term" value="P:glycine biosynthetic process from serine"/>
    <property type="evidence" value="ECO:0007669"/>
    <property type="project" value="UniProtKB-UniRule"/>
</dbReference>
<dbReference type="GO" id="GO:0035999">
    <property type="term" value="P:tetrahydrofolate interconversion"/>
    <property type="evidence" value="ECO:0007669"/>
    <property type="project" value="UniProtKB-UniRule"/>
</dbReference>
<dbReference type="CDD" id="cd00378">
    <property type="entry name" value="SHMT"/>
    <property type="match status" value="1"/>
</dbReference>
<dbReference type="FunFam" id="3.40.640.10:FF:000001">
    <property type="entry name" value="Serine hydroxymethyltransferase"/>
    <property type="match status" value="1"/>
</dbReference>
<dbReference type="FunFam" id="3.90.1150.10:FF:000003">
    <property type="entry name" value="Serine hydroxymethyltransferase"/>
    <property type="match status" value="1"/>
</dbReference>
<dbReference type="Gene3D" id="3.90.1150.10">
    <property type="entry name" value="Aspartate Aminotransferase, domain 1"/>
    <property type="match status" value="1"/>
</dbReference>
<dbReference type="Gene3D" id="3.40.640.10">
    <property type="entry name" value="Type I PLP-dependent aspartate aminotransferase-like (Major domain)"/>
    <property type="match status" value="1"/>
</dbReference>
<dbReference type="HAMAP" id="MF_00051">
    <property type="entry name" value="SHMT"/>
    <property type="match status" value="1"/>
</dbReference>
<dbReference type="InterPro" id="IPR015424">
    <property type="entry name" value="PyrdxlP-dep_Trfase"/>
</dbReference>
<dbReference type="InterPro" id="IPR015421">
    <property type="entry name" value="PyrdxlP-dep_Trfase_major"/>
</dbReference>
<dbReference type="InterPro" id="IPR015422">
    <property type="entry name" value="PyrdxlP-dep_Trfase_small"/>
</dbReference>
<dbReference type="InterPro" id="IPR001085">
    <property type="entry name" value="Ser_HO-MeTrfase"/>
</dbReference>
<dbReference type="InterPro" id="IPR049943">
    <property type="entry name" value="Ser_HO-MeTrfase-like"/>
</dbReference>
<dbReference type="InterPro" id="IPR019798">
    <property type="entry name" value="Ser_HO-MeTrfase_PLP_BS"/>
</dbReference>
<dbReference type="InterPro" id="IPR039429">
    <property type="entry name" value="SHMT-like_dom"/>
</dbReference>
<dbReference type="NCBIfam" id="NF000586">
    <property type="entry name" value="PRK00011.1"/>
    <property type="match status" value="1"/>
</dbReference>
<dbReference type="PANTHER" id="PTHR11680">
    <property type="entry name" value="SERINE HYDROXYMETHYLTRANSFERASE"/>
    <property type="match status" value="1"/>
</dbReference>
<dbReference type="PANTHER" id="PTHR11680:SF50">
    <property type="entry name" value="SERINE HYDROXYMETHYLTRANSFERASE"/>
    <property type="match status" value="1"/>
</dbReference>
<dbReference type="Pfam" id="PF00464">
    <property type="entry name" value="SHMT"/>
    <property type="match status" value="1"/>
</dbReference>
<dbReference type="PIRSF" id="PIRSF000412">
    <property type="entry name" value="SHMT"/>
    <property type="match status" value="1"/>
</dbReference>
<dbReference type="SUPFAM" id="SSF53383">
    <property type="entry name" value="PLP-dependent transferases"/>
    <property type="match status" value="1"/>
</dbReference>
<dbReference type="PROSITE" id="PS00096">
    <property type="entry name" value="SHMT"/>
    <property type="match status" value="1"/>
</dbReference>
<protein>
    <recommendedName>
        <fullName evidence="1">Serine hydroxymethyltransferase 1</fullName>
        <shortName evidence="1">SHMT 1</shortName>
        <shortName evidence="1">Serine methylase 1</shortName>
        <ecNumber evidence="1">2.1.2.1</ecNumber>
    </recommendedName>
</protein>
<name>GLYA1_HAHCH</name>
<organism>
    <name type="scientific">Hahella chejuensis (strain KCTC 2396)</name>
    <dbReference type="NCBI Taxonomy" id="349521"/>
    <lineage>
        <taxon>Bacteria</taxon>
        <taxon>Pseudomonadati</taxon>
        <taxon>Pseudomonadota</taxon>
        <taxon>Gammaproteobacteria</taxon>
        <taxon>Oceanospirillales</taxon>
        <taxon>Hahellaceae</taxon>
        <taxon>Hahella</taxon>
    </lineage>
</organism>
<proteinExistence type="inferred from homology"/>
<gene>
    <name evidence="1" type="primary">glyA1</name>
    <name type="ordered locus">HCH_03860</name>
</gene>